<gene>
    <name type="primary">xdhB</name>
    <name type="synonym">ygeT</name>
    <name type="ordered locus">b2867</name>
    <name type="ordered locus">JW2835</name>
</gene>
<accession>Q46800</accession>
<accession>Q2M9X3</accession>
<proteinExistence type="predicted"/>
<feature type="chain" id="PRO_0000166092" description="Putative xanthine dehydrogenase FAD-binding subunit XdhB">
    <location>
        <begin position="1"/>
        <end position="292"/>
    </location>
</feature>
<feature type="domain" description="FAD-binding PCMH-type" evidence="2">
    <location>
        <begin position="1"/>
        <end position="176"/>
    </location>
</feature>
<feature type="binding site" evidence="1">
    <location>
        <begin position="27"/>
        <end position="34"/>
    </location>
    <ligand>
        <name>FAD</name>
        <dbReference type="ChEBI" id="CHEBI:57692"/>
    </ligand>
</feature>
<feature type="binding site" evidence="1">
    <location>
        <begin position="109"/>
        <end position="113"/>
    </location>
    <ligand>
        <name>FAD</name>
        <dbReference type="ChEBI" id="CHEBI:57692"/>
    </ligand>
</feature>
<feature type="binding site" evidence="1">
    <location>
        <position position="165"/>
    </location>
    <ligand>
        <name>FAD</name>
        <dbReference type="ChEBI" id="CHEBI:57692"/>
    </ligand>
</feature>
<feature type="binding site" evidence="1">
    <location>
        <position position="184"/>
    </location>
    <ligand>
        <name>FAD</name>
        <dbReference type="ChEBI" id="CHEBI:57692"/>
    </ligand>
</feature>
<comment type="function">
    <text>Presumed to be a dehydrogenase, but possibly an oxidase. Participates in limited purine salvage (requires aspartate) but does not support aerobic growth on purines as the sole carbon source (purine catabolism).</text>
</comment>
<comment type="catalytic activity">
    <reaction>
        <text>xanthine + NAD(+) + H2O = urate + NADH + H(+)</text>
        <dbReference type="Rhea" id="RHEA:16669"/>
        <dbReference type="ChEBI" id="CHEBI:15377"/>
        <dbReference type="ChEBI" id="CHEBI:15378"/>
        <dbReference type="ChEBI" id="CHEBI:17712"/>
        <dbReference type="ChEBI" id="CHEBI:17775"/>
        <dbReference type="ChEBI" id="CHEBI:57540"/>
        <dbReference type="ChEBI" id="CHEBI:57945"/>
        <dbReference type="EC" id="1.17.1.4"/>
    </reaction>
</comment>
<comment type="catalytic activity">
    <reaction>
        <text>hypoxanthine + NAD(+) + H2O = xanthine + NADH + H(+)</text>
        <dbReference type="Rhea" id="RHEA:24670"/>
        <dbReference type="ChEBI" id="CHEBI:15377"/>
        <dbReference type="ChEBI" id="CHEBI:15378"/>
        <dbReference type="ChEBI" id="CHEBI:17368"/>
        <dbReference type="ChEBI" id="CHEBI:17712"/>
        <dbReference type="ChEBI" id="CHEBI:57540"/>
        <dbReference type="ChEBI" id="CHEBI:57945"/>
        <dbReference type="EC" id="1.17.1.4"/>
    </reaction>
</comment>
<comment type="cofactor">
    <cofactor evidence="1">
        <name>FAD</name>
        <dbReference type="ChEBI" id="CHEBI:57692"/>
    </cofactor>
</comment>
<comment type="pathway">
    <text>Purine metabolism; hypoxanthine degradation; urate from hypoxanthine: step 1/2.</text>
</comment>
<comment type="pathway">
    <text>Purine metabolism; hypoxanthine degradation; urate from hypoxanthine: step 2/2.</text>
</comment>
<comment type="subunit">
    <text evidence="3">Heterotrimer of XdhA, XdhB and XdhC.</text>
</comment>
<dbReference type="EC" id="1.17.1.4"/>
<dbReference type="EMBL" id="U28375">
    <property type="protein sequence ID" value="AAA83048.1"/>
    <property type="molecule type" value="Genomic_DNA"/>
</dbReference>
<dbReference type="EMBL" id="U00096">
    <property type="protein sequence ID" value="AAC75905.1"/>
    <property type="molecule type" value="Genomic_DNA"/>
</dbReference>
<dbReference type="EMBL" id="AP009048">
    <property type="protein sequence ID" value="BAE76933.1"/>
    <property type="molecule type" value="Genomic_DNA"/>
</dbReference>
<dbReference type="PIR" id="C65070">
    <property type="entry name" value="C65070"/>
</dbReference>
<dbReference type="RefSeq" id="NP_417343.1">
    <property type="nucleotide sequence ID" value="NC_000913.3"/>
</dbReference>
<dbReference type="RefSeq" id="WP_000459182.1">
    <property type="nucleotide sequence ID" value="NZ_LN832404.1"/>
</dbReference>
<dbReference type="SMR" id="Q46800"/>
<dbReference type="BioGRID" id="4262320">
    <property type="interactions" value="141"/>
</dbReference>
<dbReference type="ComplexPortal" id="CPX-5122">
    <property type="entry name" value="XdhABC xanthine dehydrogenase complex"/>
</dbReference>
<dbReference type="FunCoup" id="Q46800">
    <property type="interactions" value="418"/>
</dbReference>
<dbReference type="IntAct" id="Q46800">
    <property type="interactions" value="5"/>
</dbReference>
<dbReference type="STRING" id="511145.b2867"/>
<dbReference type="jPOST" id="Q46800"/>
<dbReference type="PaxDb" id="511145-b2867"/>
<dbReference type="EnsemblBacteria" id="AAC75905">
    <property type="protein sequence ID" value="AAC75905"/>
    <property type="gene ID" value="b2867"/>
</dbReference>
<dbReference type="GeneID" id="75205296"/>
<dbReference type="GeneID" id="947205"/>
<dbReference type="KEGG" id="ecj:JW2835"/>
<dbReference type="KEGG" id="eco:b2867"/>
<dbReference type="KEGG" id="ecoc:C3026_15730"/>
<dbReference type="PATRIC" id="fig|1411691.4.peg.3867"/>
<dbReference type="EchoBASE" id="EB2862"/>
<dbReference type="eggNOG" id="COG1319">
    <property type="taxonomic scope" value="Bacteria"/>
</dbReference>
<dbReference type="HOGENOM" id="CLU_058050_0_1_6"/>
<dbReference type="InParanoid" id="Q46800"/>
<dbReference type="OMA" id="AMTTHHD"/>
<dbReference type="OrthoDB" id="9814706at2"/>
<dbReference type="PhylomeDB" id="Q46800"/>
<dbReference type="BioCyc" id="EcoCyc:G7486-MONOMER"/>
<dbReference type="BioCyc" id="MetaCyc:G7486-MONOMER"/>
<dbReference type="BRENDA" id="1.17.1.4">
    <property type="organism ID" value="2026"/>
</dbReference>
<dbReference type="UniPathway" id="UPA00604">
    <property type="reaction ID" value="UER00661"/>
</dbReference>
<dbReference type="UniPathway" id="UPA00604">
    <property type="reaction ID" value="UER00662"/>
</dbReference>
<dbReference type="PRO" id="PR:Q46800"/>
<dbReference type="Proteomes" id="UP000000625">
    <property type="component" value="Chromosome"/>
</dbReference>
<dbReference type="GO" id="GO:0005737">
    <property type="term" value="C:cytoplasm"/>
    <property type="evidence" value="ECO:0000303"/>
    <property type="project" value="ComplexPortal"/>
</dbReference>
<dbReference type="GO" id="GO:0002197">
    <property type="term" value="C:xanthine dehydrogenase complex"/>
    <property type="evidence" value="ECO:0000303"/>
    <property type="project" value="ComplexPortal"/>
</dbReference>
<dbReference type="GO" id="GO:0071949">
    <property type="term" value="F:FAD binding"/>
    <property type="evidence" value="ECO:0007669"/>
    <property type="project" value="InterPro"/>
</dbReference>
<dbReference type="GO" id="GO:0004854">
    <property type="term" value="F:xanthine dehydrogenase activity"/>
    <property type="evidence" value="ECO:0007669"/>
    <property type="project" value="UniProtKB-EC"/>
</dbReference>
<dbReference type="GO" id="GO:0009114">
    <property type="term" value="P:hypoxanthine catabolic process"/>
    <property type="evidence" value="ECO:0000315"/>
    <property type="project" value="EcoliWiki"/>
</dbReference>
<dbReference type="GO" id="GO:0006166">
    <property type="term" value="P:purine ribonucleoside salvage"/>
    <property type="evidence" value="ECO:0000303"/>
    <property type="project" value="ComplexPortal"/>
</dbReference>
<dbReference type="FunFam" id="3.30.390.50:FF:000004">
    <property type="entry name" value="Xanthine dehydrogenase, FAD binding subunit"/>
    <property type="match status" value="1"/>
</dbReference>
<dbReference type="FunFam" id="3.30.465.10:FF:000017">
    <property type="entry name" value="Xanthine dehydrogenase, FAD binding subunit"/>
    <property type="match status" value="1"/>
</dbReference>
<dbReference type="Gene3D" id="3.30.465.10">
    <property type="match status" value="1"/>
</dbReference>
<dbReference type="Gene3D" id="3.30.390.50">
    <property type="entry name" value="CO dehydrogenase flavoprotein, C-terminal domain"/>
    <property type="match status" value="1"/>
</dbReference>
<dbReference type="Gene3D" id="3.30.43.10">
    <property type="entry name" value="Uridine Diphospho-n-acetylenolpyruvylglucosamine Reductase, domain 2"/>
    <property type="match status" value="1"/>
</dbReference>
<dbReference type="InterPro" id="IPR005107">
    <property type="entry name" value="CO_DH_flav_C"/>
</dbReference>
<dbReference type="InterPro" id="IPR036683">
    <property type="entry name" value="CO_DH_flav_C_dom_sf"/>
</dbReference>
<dbReference type="InterPro" id="IPR051312">
    <property type="entry name" value="Diverse_Substr_Oxidored"/>
</dbReference>
<dbReference type="InterPro" id="IPR016166">
    <property type="entry name" value="FAD-bd_PCMH"/>
</dbReference>
<dbReference type="InterPro" id="IPR036318">
    <property type="entry name" value="FAD-bd_PCMH-like_sf"/>
</dbReference>
<dbReference type="InterPro" id="IPR016167">
    <property type="entry name" value="FAD-bd_PCMH_sub1"/>
</dbReference>
<dbReference type="InterPro" id="IPR016169">
    <property type="entry name" value="FAD-bd_PCMH_sub2"/>
</dbReference>
<dbReference type="InterPro" id="IPR002346">
    <property type="entry name" value="Mopterin_DH_FAD-bd"/>
</dbReference>
<dbReference type="InterPro" id="IPR050031">
    <property type="entry name" value="XdhB_XDHase"/>
</dbReference>
<dbReference type="NCBIfam" id="NF007427">
    <property type="entry name" value="PRK09971.1"/>
    <property type="match status" value="1"/>
</dbReference>
<dbReference type="NCBIfam" id="NF043083">
    <property type="entry name" value="XdhB_XDHase"/>
    <property type="match status" value="1"/>
</dbReference>
<dbReference type="PANTHER" id="PTHR42659:SF9">
    <property type="entry name" value="XANTHINE DEHYDROGENASE FAD-BINDING SUBUNIT XDHB-RELATED"/>
    <property type="match status" value="1"/>
</dbReference>
<dbReference type="PANTHER" id="PTHR42659">
    <property type="entry name" value="XANTHINE DEHYDROGENASE SUBUNIT C-RELATED"/>
    <property type="match status" value="1"/>
</dbReference>
<dbReference type="Pfam" id="PF03450">
    <property type="entry name" value="CO_deh_flav_C"/>
    <property type="match status" value="1"/>
</dbReference>
<dbReference type="Pfam" id="PF00941">
    <property type="entry name" value="FAD_binding_5"/>
    <property type="match status" value="1"/>
</dbReference>
<dbReference type="SMART" id="SM01092">
    <property type="entry name" value="CO_deh_flav_C"/>
    <property type="match status" value="1"/>
</dbReference>
<dbReference type="SUPFAM" id="SSF55447">
    <property type="entry name" value="CO dehydrogenase flavoprotein C-terminal domain-like"/>
    <property type="match status" value="1"/>
</dbReference>
<dbReference type="SUPFAM" id="SSF56176">
    <property type="entry name" value="FAD-binding/transporter-associated domain-like"/>
    <property type="match status" value="1"/>
</dbReference>
<dbReference type="PROSITE" id="PS51387">
    <property type="entry name" value="FAD_PCMH"/>
    <property type="match status" value="1"/>
</dbReference>
<evidence type="ECO:0000250" key="1"/>
<evidence type="ECO:0000255" key="2">
    <source>
        <dbReference type="PROSITE-ProRule" id="PRU00718"/>
    </source>
</evidence>
<evidence type="ECO:0000305" key="3"/>
<reference key="1">
    <citation type="journal article" date="1997" name="Science">
        <title>The complete genome sequence of Escherichia coli K-12.</title>
        <authorList>
            <person name="Blattner F.R."/>
            <person name="Plunkett G. III"/>
            <person name="Bloch C.A."/>
            <person name="Perna N.T."/>
            <person name="Burland V."/>
            <person name="Riley M."/>
            <person name="Collado-Vides J."/>
            <person name="Glasner J.D."/>
            <person name="Rode C.K."/>
            <person name="Mayhew G.F."/>
            <person name="Gregor J."/>
            <person name="Davis N.W."/>
            <person name="Kirkpatrick H.A."/>
            <person name="Goeden M.A."/>
            <person name="Rose D.J."/>
            <person name="Mau B."/>
            <person name="Shao Y."/>
        </authorList>
    </citation>
    <scope>NUCLEOTIDE SEQUENCE [LARGE SCALE GENOMIC DNA]</scope>
    <source>
        <strain>K12 / MG1655 / ATCC 47076</strain>
    </source>
</reference>
<reference key="2">
    <citation type="journal article" date="2006" name="Mol. Syst. Biol.">
        <title>Highly accurate genome sequences of Escherichia coli K-12 strains MG1655 and W3110.</title>
        <authorList>
            <person name="Hayashi K."/>
            <person name="Morooka N."/>
            <person name="Yamamoto Y."/>
            <person name="Fujita K."/>
            <person name="Isono K."/>
            <person name="Choi S."/>
            <person name="Ohtsubo E."/>
            <person name="Baba T."/>
            <person name="Wanner B.L."/>
            <person name="Mori H."/>
            <person name="Horiuchi T."/>
        </authorList>
    </citation>
    <scope>NUCLEOTIDE SEQUENCE [LARGE SCALE GENOMIC DNA]</scope>
    <source>
        <strain>K12 / W3110 / ATCC 27325 / DSM 5911</strain>
    </source>
</reference>
<reference key="3">
    <citation type="journal article" date="2000" name="J. Bacteriol.">
        <title>Purine catabolism in Escherichia coli and function of xanthine dehydrogenase in purine salvage.</title>
        <authorList>
            <person name="Xi H."/>
            <person name="Schneider B.L."/>
            <person name="Reitzer L."/>
        </authorList>
    </citation>
    <scope>DISCUSSION OF FUNCTION</scope>
    <source>
        <strain>K12 / W3110 / ATCC 27325 / DSM 5911</strain>
    </source>
</reference>
<organism>
    <name type="scientific">Escherichia coli (strain K12)</name>
    <dbReference type="NCBI Taxonomy" id="83333"/>
    <lineage>
        <taxon>Bacteria</taxon>
        <taxon>Pseudomonadati</taxon>
        <taxon>Pseudomonadota</taxon>
        <taxon>Gammaproteobacteria</taxon>
        <taxon>Enterobacterales</taxon>
        <taxon>Enterobacteriaceae</taxon>
        <taxon>Escherichia</taxon>
    </lineage>
</organism>
<sequence>MFDFASYHRAATLADAINLLADNPQAKLLAGGTDVLIQLHHHNDRYRHIVDIHNLAELRGITLAEDGSLRIGSATTFTQLIEDPITQRHLPALCAAATSIAGPQIRNVATYGGNICNGATSADSATPTLIYDAKLEIHSPRGVRFVPINGFHTGPGKVSLEHDEILVAFHFPPQPKEHAGSAHFKYAMRDAMDISTIGCAAHCRLDNGNFSELRLAFGVAAPTPIRCQHAEQTAQNAPLNLQTLEAISESVLQDVAPRSSWRASKEFRLHLIQTMTKKVISEAVAAAGGKLQ</sequence>
<name>XDHB_ECOLI</name>
<keyword id="KW-0274">FAD</keyword>
<keyword id="KW-0285">Flavoprotein</keyword>
<keyword id="KW-0520">NAD</keyword>
<keyword id="KW-0560">Oxidoreductase</keyword>
<keyword id="KW-0659">Purine metabolism</keyword>
<keyword id="KW-0660">Purine salvage</keyword>
<keyword id="KW-1185">Reference proteome</keyword>
<protein>
    <recommendedName>
        <fullName>Putative xanthine dehydrogenase FAD-binding subunit XdhB</fullName>
        <ecNumber>1.17.1.4</ecNumber>
    </recommendedName>
</protein>